<name>PDEB_BORBU</name>
<evidence type="ECO:0000255" key="1">
    <source>
        <dbReference type="PROSITE-ProRule" id="PRU01176"/>
    </source>
</evidence>
<evidence type="ECO:0000269" key="2">
    <source>
    </source>
</evidence>
<evidence type="ECO:0000303" key="3">
    <source>
    </source>
</evidence>
<evidence type="ECO:0000305" key="4"/>
<protein>
    <recommendedName>
        <fullName evidence="4">Cyclic di-GMP phosphodiesterase PdeB</fullName>
        <ecNumber evidence="2">3.1.4.-</ecNumber>
    </recommendedName>
</protein>
<proteinExistence type="evidence at protein level"/>
<comment type="function">
    <text evidence="2">Phosphodiesterase (PDE) that catalyzes the hydrolysis of cyclic diguanylate (c-di-GMP) to GMP.</text>
</comment>
<comment type="catalytic activity">
    <reaction evidence="2">
        <text>3',3'-c-di-GMP + 2 H2O = 2 GMP + 2 H(+)</text>
        <dbReference type="Rhea" id="RHEA:52928"/>
        <dbReference type="ChEBI" id="CHEBI:15377"/>
        <dbReference type="ChEBI" id="CHEBI:15378"/>
        <dbReference type="ChEBI" id="CHEBI:58115"/>
        <dbReference type="ChEBI" id="CHEBI:58805"/>
    </reaction>
</comment>
<comment type="cofactor">
    <cofactor evidence="2">
        <name>Mn(2+)</name>
        <dbReference type="ChEBI" id="CHEBI:29035"/>
    </cofactor>
</comment>
<comment type="biophysicochemical properties">
    <kinetics>
        <KM evidence="2">2.9 nM for c-di-GMP</KM>
    </kinetics>
</comment>
<comment type="disruption phenotype">
    <text evidence="2">Mutant cells exhibit a significantly increased flex rate. Deletion does not significantly affect virulence in needle-inoculated mice, but mutants display a reduced ability to survive in ticks and they are unable to complete the mouse-tick-mouse infection cycle.</text>
</comment>
<feature type="chain" id="PRO_0000174396" description="Cyclic di-GMP phosphodiesterase PdeB">
    <location>
        <begin position="1"/>
        <end position="379"/>
    </location>
</feature>
<feature type="domain" description="HD-GYP" evidence="1">
    <location>
        <begin position="114"/>
        <end position="310"/>
    </location>
</feature>
<reference key="1">
    <citation type="journal article" date="1997" name="Nature">
        <title>Genomic sequence of a Lyme disease spirochaete, Borrelia burgdorferi.</title>
        <authorList>
            <person name="Fraser C.M."/>
            <person name="Casjens S."/>
            <person name="Huang W.M."/>
            <person name="Sutton G.G."/>
            <person name="Clayton R.A."/>
            <person name="Lathigra R."/>
            <person name="White O."/>
            <person name="Ketchum K.A."/>
            <person name="Dodson R.J."/>
            <person name="Hickey E.K."/>
            <person name="Gwinn M.L."/>
            <person name="Dougherty B.A."/>
            <person name="Tomb J.-F."/>
            <person name="Fleischmann R.D."/>
            <person name="Richardson D.L."/>
            <person name="Peterson J.D."/>
            <person name="Kerlavage A.R."/>
            <person name="Quackenbush J."/>
            <person name="Salzberg S.L."/>
            <person name="Hanson M."/>
            <person name="van Vugt R."/>
            <person name="Palmer N."/>
            <person name="Adams M.D."/>
            <person name="Gocayne J.D."/>
            <person name="Weidman J.F."/>
            <person name="Utterback T.R."/>
            <person name="Watthey L."/>
            <person name="McDonald L.A."/>
            <person name="Artiach P."/>
            <person name="Bowman C."/>
            <person name="Garland S.A."/>
            <person name="Fujii C."/>
            <person name="Cotton M.D."/>
            <person name="Horst K."/>
            <person name="Roberts K.M."/>
            <person name="Hatch B."/>
            <person name="Smith H.O."/>
            <person name="Venter J.C."/>
        </authorList>
    </citation>
    <scope>NUCLEOTIDE SEQUENCE [LARGE SCALE GENOMIC DNA]</scope>
    <source>
        <strain>ATCC 35210 / DSM 4680 / CIP 102532 / B31</strain>
    </source>
</reference>
<reference key="2">
    <citation type="journal article" date="2011" name="Infect. Immun.">
        <title>Analysis of the HD-GYP domain cyclic dimeric GMP phosphodiesterase reveals a role in motility and the enzootic life cycle of Borrelia burgdorferi.</title>
        <authorList>
            <person name="Sultan S.Z."/>
            <person name="Pitzer J.E."/>
            <person name="Boquoi T."/>
            <person name="Hobbs G."/>
            <person name="Miller M.R."/>
            <person name="Motaleb M.A."/>
        </authorList>
    </citation>
    <scope>FUNCTION</scope>
    <scope>CATALYTIC ACTIVITY</scope>
    <scope>COFACTOR</scope>
    <scope>BIOPHYSICOCHEMICAL PROPERTIES</scope>
    <scope>DISRUPTION PHENOTYPE</scope>
    <source>
        <strain>ATCC 35210 / DSM 4680 / CIP 102532 / B31</strain>
    </source>
</reference>
<sequence length="379" mass="43457">MQNSESIIKNIKNSSYLIDKEFLVWPENAFIGDKNIELIEKWNLKSYIKERKNFFSDDSVKKEYEEIHKKFNEEAISSYHVIISNLEEIYENCKRNKKIYYQDIMPTVKKVIEFYKKQKKIFIKYFRIPKLSANYHIIHSVNTAILTVALGNEMGLNNYKTVELCSIALLHKIGFLFIPSKISEKKEALTEEELEIIKKYPIISYKIASTSNLSRSICLTLLTHKENLDGTGYPKGLTSENISIESNIIGAASAYSAIILDKAYKKSFNSGASIIELIKDADKKFDKRVLKLIINAISSCPLDFIVELNDNSIAKIVDIDESNPNLPYINYIIKNGKVIDKNEQSSVQSIPNTNTGIKKILNQNEIELIKNKYSLIDII</sequence>
<dbReference type="EC" id="3.1.4.-" evidence="2"/>
<dbReference type="EMBL" id="AE000783">
    <property type="protein sequence ID" value="AAC66766.1"/>
    <property type="molecule type" value="Genomic_DNA"/>
</dbReference>
<dbReference type="PIR" id="E70146">
    <property type="entry name" value="E70146"/>
</dbReference>
<dbReference type="RefSeq" id="NP_212508.1">
    <property type="nucleotide sequence ID" value="NC_001318.1"/>
</dbReference>
<dbReference type="RefSeq" id="WP_002556969.1">
    <property type="nucleotide sequence ID" value="NC_001318.1"/>
</dbReference>
<dbReference type="SMR" id="O50161"/>
<dbReference type="STRING" id="224326.BB_0374"/>
<dbReference type="PaxDb" id="224326-BB_0374"/>
<dbReference type="EnsemblBacteria" id="AAC66766">
    <property type="protein sequence ID" value="AAC66766"/>
    <property type="gene ID" value="BB_0374"/>
</dbReference>
<dbReference type="GeneID" id="56567802"/>
<dbReference type="KEGG" id="bbu:BB_0374"/>
<dbReference type="PATRIC" id="fig|224326.49.peg.769"/>
<dbReference type="HOGENOM" id="CLU_000445_92_2_12"/>
<dbReference type="OrthoDB" id="9781505at2"/>
<dbReference type="Proteomes" id="UP000001807">
    <property type="component" value="Chromosome"/>
</dbReference>
<dbReference type="GO" id="GO:0016787">
    <property type="term" value="F:hydrolase activity"/>
    <property type="evidence" value="ECO:0007669"/>
    <property type="project" value="UniProtKB-KW"/>
</dbReference>
<dbReference type="CDD" id="cd00077">
    <property type="entry name" value="HDc"/>
    <property type="match status" value="1"/>
</dbReference>
<dbReference type="Gene3D" id="1.10.3210.10">
    <property type="entry name" value="Hypothetical protein af1432"/>
    <property type="match status" value="1"/>
</dbReference>
<dbReference type="InterPro" id="IPR003607">
    <property type="entry name" value="HD/PDEase_dom"/>
</dbReference>
<dbReference type="InterPro" id="IPR037522">
    <property type="entry name" value="HD_GYP_dom"/>
</dbReference>
<dbReference type="PANTHER" id="PTHR43155:SF2">
    <property type="entry name" value="CYCLIC DI-GMP PHOSPHODIESTERASE PA4108"/>
    <property type="match status" value="1"/>
</dbReference>
<dbReference type="PANTHER" id="PTHR43155">
    <property type="entry name" value="CYCLIC DI-GMP PHOSPHODIESTERASE PA4108-RELATED"/>
    <property type="match status" value="1"/>
</dbReference>
<dbReference type="Pfam" id="PF13487">
    <property type="entry name" value="HD_5"/>
    <property type="match status" value="1"/>
</dbReference>
<dbReference type="SMART" id="SM00471">
    <property type="entry name" value="HDc"/>
    <property type="match status" value="1"/>
</dbReference>
<dbReference type="SUPFAM" id="SSF109604">
    <property type="entry name" value="HD-domain/PDEase-like"/>
    <property type="match status" value="1"/>
</dbReference>
<dbReference type="PROSITE" id="PS51832">
    <property type="entry name" value="HD_GYP"/>
    <property type="match status" value="1"/>
</dbReference>
<gene>
    <name evidence="3" type="primary">PdeB</name>
    <name type="ordered locus">BB_0374</name>
</gene>
<organism>
    <name type="scientific">Borreliella burgdorferi (strain ATCC 35210 / DSM 4680 / CIP 102532 / B31)</name>
    <name type="common">Borrelia burgdorferi</name>
    <dbReference type="NCBI Taxonomy" id="224326"/>
    <lineage>
        <taxon>Bacteria</taxon>
        <taxon>Pseudomonadati</taxon>
        <taxon>Spirochaetota</taxon>
        <taxon>Spirochaetia</taxon>
        <taxon>Spirochaetales</taxon>
        <taxon>Borreliaceae</taxon>
        <taxon>Borreliella</taxon>
    </lineage>
</organism>
<accession>O50161</accession>
<keyword id="KW-0973">c-di-GMP</keyword>
<keyword id="KW-0378">Hydrolase</keyword>
<keyword id="KW-1185">Reference proteome</keyword>